<sequence>MRLLYLHADRFEYKTVKPALKNPPDPPGEASFGEALVVFTTVEDGDGPQTVMYAASDIASHSSRLKVTTVILYPYAHLSSRLAKPMAAHKRLIELEGALRTKFPGHVHRAPFGWYKSFSIACKGHPLAELSRSFTEAGALQPWPAVEDYKTGLSGEVLARAGLLGGGSLSPASWALEVHRRLAEEVVGPAESVGFGESLSEAYQACISSSVTTLLMGPYPPSIVFGPLEDDPVEAVSRVLGLISPQLEGVKPLLSGGEGALKASSPDGAELPVAFLKEGRVCLGPTLSFFKLAVSMLVEKARKEGLTPYLNPTLTPVQSAVIPVDSESEGYAQRIAEDLAASGVRVSIVRGSGLGRRVREAGRSWASLVIVVGKREEETGTVVVRRRWEPGKQEVLTLDELSSEAKKLASGSRGSLYSTTL</sequence>
<evidence type="ECO:0000250" key="1">
    <source>
        <dbReference type="UniProtKB" id="Q980D1"/>
    </source>
</evidence>
<evidence type="ECO:0000269" key="2">
    <source>
    </source>
</evidence>
<evidence type="ECO:0000303" key="3">
    <source>
    </source>
</evidence>
<evidence type="ECO:0000305" key="4"/>
<evidence type="ECO:0007744" key="5">
    <source>
        <dbReference type="PDB" id="4RR6"/>
    </source>
</evidence>
<evidence type="ECO:0007744" key="6">
    <source>
        <dbReference type="PDB" id="4RR8"/>
    </source>
</evidence>
<evidence type="ECO:0007744" key="7">
    <source>
        <dbReference type="PDB" id="4RRA"/>
    </source>
</evidence>
<evidence type="ECO:0007744" key="8">
    <source>
        <dbReference type="PDB" id="4RRC"/>
    </source>
</evidence>
<evidence type="ECO:0007744" key="9">
    <source>
        <dbReference type="PDB" id="4RRD"/>
    </source>
</evidence>
<evidence type="ECO:0007744" key="10">
    <source>
        <dbReference type="PDB" id="4RRH"/>
    </source>
</evidence>
<evidence type="ECO:0007744" key="11">
    <source>
        <dbReference type="PDB" id="4RRI"/>
    </source>
</evidence>
<evidence type="ECO:0007744" key="12">
    <source>
        <dbReference type="PDB" id="4RRJ"/>
    </source>
</evidence>
<evidence type="ECO:0007744" key="13">
    <source>
        <dbReference type="PDB" id="4RRK"/>
    </source>
</evidence>
<evidence type="ECO:0007744" key="14">
    <source>
        <dbReference type="PDB" id="4RRL"/>
    </source>
</evidence>
<evidence type="ECO:0007744" key="15">
    <source>
        <dbReference type="PDB" id="4RRM"/>
    </source>
</evidence>
<evidence type="ECO:0007829" key="16">
    <source>
        <dbReference type="PDB" id="4RRH"/>
    </source>
</evidence>
<evidence type="ECO:0007829" key="17">
    <source>
        <dbReference type="PDB" id="4RRI"/>
    </source>
</evidence>
<feature type="chain" id="PRO_0000101118" description="Threonine--tRNA ligase editing subunit">
    <location>
        <begin position="1"/>
        <end position="421"/>
    </location>
</feature>
<feature type="mutagenesis site" description="Isolated domain has decreased deacylation of mischarged L-seryl-tRNA(Thr), no activity on L-threonyl-tRNA(Thr). Deacylates correctly charged glycyl-tRNA(Gly)." evidence="2">
    <original>H</original>
    <variation>A</variation>
    <location>
        <position position="77"/>
    </location>
</feature>
<feature type="mutagenesis site" description="Whole protein and isolated domain have nearly wild-type deacylation of mischarged L-seryl-tRNA(Thr), no activity on L-threonyl-tRNA(Thr). Same results; when associated with A-129." evidence="2">
    <original>Y</original>
    <variation>A</variation>
    <location>
        <position position="115"/>
    </location>
</feature>
<feature type="mutagenesis site" description="Isolated domain does not deacylate mischarged L-seryl-tRNA(Thr), no activity on L-threonyl-tRNA(Thr)." evidence="2">
    <original>K</original>
    <variation>M</variation>
    <location>
        <position position="116"/>
    </location>
</feature>
<feature type="mutagenesis site" description="Whole protein and isolated domain have nearly wild-type deacylation of mischarged L-seryl-tRNA(Thr), no activity on L-threonyl-tRNA(Thr). Same results; when associated with A-115." evidence="2">
    <original>E</original>
    <variation>A</variation>
    <location>
        <position position="129"/>
    </location>
</feature>
<feature type="strand" evidence="17">
    <location>
        <begin position="2"/>
        <end position="22"/>
    </location>
</feature>
<feature type="strand" evidence="17">
    <location>
        <begin position="29"/>
        <end position="41"/>
    </location>
</feature>
<feature type="helix" evidence="17">
    <location>
        <begin position="48"/>
        <end position="65"/>
    </location>
</feature>
<feature type="strand" evidence="17">
    <location>
        <begin position="69"/>
        <end position="74"/>
    </location>
</feature>
<feature type="strand" evidence="16">
    <location>
        <begin position="80"/>
        <end position="82"/>
    </location>
</feature>
<feature type="helix" evidence="17">
    <location>
        <begin position="85"/>
        <end position="99"/>
    </location>
</feature>
<feature type="turn" evidence="17">
    <location>
        <begin position="100"/>
        <end position="102"/>
    </location>
</feature>
<feature type="strand" evidence="17">
    <location>
        <begin position="105"/>
        <end position="109"/>
    </location>
</feature>
<feature type="strand" evidence="17">
    <location>
        <begin position="112"/>
        <end position="122"/>
    </location>
</feature>
<feature type="strand" evidence="17">
    <location>
        <begin position="128"/>
        <end position="133"/>
    </location>
</feature>
<name>SYTE_AERPE</name>
<comment type="function">
    <text evidence="1 2">Freestanding tRNA editing subunit of threonine--tRNA ligase, the catalytic subunit is probably AC Q9YDW0. Deacylates (edits) mischarged L-seryl-tRNA(Thr) in trans; has no activity on correctly charged L-threonyl-tRNA(Thr) (PubMed:26113036). Probably does not aminoacylate tRNA(Thr) (By similarity). Deacylates correctly charged glycyl-tRNA(Gly), but not glycyl-tRNA(Gly)(2'-dA76) (the terminal 2'-OH of tRNA adenine 76 has been dehydroxylated) nor the 2'-fluoro tRNA derivative, strongly suggesting the editing function is catalyzed by the 2'-OH of A76 of tRNA(Thr) (PubMed:26113036).</text>
</comment>
<comment type="subunit">
    <text evidence="1">Probably interacts with its catalytic subunit (By similarity).</text>
</comment>
<comment type="subcellular location">
    <subcellularLocation>
        <location evidence="4">Cytoplasm</location>
    </subcellularLocation>
</comment>
<comment type="domain">
    <text evidence="2">The N-terminal domain (about residues 1-140) is an archaea-specific tRNA-editing domain (PubMed:26113036) that has a highly similar structure to Dtd (D-aminoacyl-tRNA deacylase). Editing of incorrectly charged L-seryl-tRNA(Thr) by this domain is tRNA catalyzed (PubMed:26113036).</text>
</comment>
<comment type="miscellaneous">
    <text evidence="4">There are two ThrRS in this archaeon. The first one (APE_0809.1, AC Q9YDW0) is most similar to bacterial ThrRS but it lacks the N-terminal editing domain. The second one (APE_0117.1, this entry) is most similar to archaeal ThrRS but lacks the central catalytic domain; it probably does not aminoacylate tRNA(Thr).</text>
</comment>
<comment type="similarity">
    <text evidence="4">Belongs to the class-II aminoacyl-tRNA synthetase family. Archaea-specific ThrRS editing domain subfamily.</text>
</comment>
<organism>
    <name type="scientific">Aeropyrum pernix (strain ATCC 700893 / DSM 11879 / JCM 9820 / NBRC 100138 / K1)</name>
    <dbReference type="NCBI Taxonomy" id="272557"/>
    <lineage>
        <taxon>Archaea</taxon>
        <taxon>Thermoproteota</taxon>
        <taxon>Thermoprotei</taxon>
        <taxon>Desulfurococcales</taxon>
        <taxon>Desulfurococcaceae</taxon>
        <taxon>Aeropyrum</taxon>
    </lineage>
</organism>
<protein>
    <recommendedName>
        <fullName evidence="4">Threonine--tRNA ligase editing subunit</fullName>
    </recommendedName>
    <alternativeName>
        <fullName evidence="4">Ser-tRNA(Thr) hydrolase</fullName>
    </alternativeName>
    <alternativeName>
        <fullName>Threonyl-tRNA synthetase 2</fullName>
        <shortName evidence="3">ThrRS 2</shortName>
    </alternativeName>
    <alternativeName>
        <fullName evidence="4">Threonyl-tRNA synthetase editing subunit</fullName>
        <shortName evidence="4">ThrS-ed</shortName>
    </alternativeName>
</protein>
<dbReference type="EMBL" id="BA000002">
    <property type="protein sequence ID" value="BAA79028.2"/>
    <property type="molecule type" value="Genomic_DNA"/>
</dbReference>
<dbReference type="PIR" id="B72766">
    <property type="entry name" value="B72766"/>
</dbReference>
<dbReference type="RefSeq" id="WP_010865502.1">
    <property type="nucleotide sequence ID" value="NC_000854.2"/>
</dbReference>
<dbReference type="PDB" id="4RR6">
    <property type="method" value="X-ray"/>
    <property type="resolution" value="1.88 A"/>
    <property type="chains" value="A=1-136"/>
</dbReference>
<dbReference type="PDB" id="4RR7">
    <property type="method" value="X-ray"/>
    <property type="resolution" value="1.86 A"/>
    <property type="chains" value="A=1-136"/>
</dbReference>
<dbReference type="PDB" id="4RR8">
    <property type="method" value="X-ray"/>
    <property type="resolution" value="1.86 A"/>
    <property type="chains" value="A=1-136"/>
</dbReference>
<dbReference type="PDB" id="4RR9">
    <property type="method" value="X-ray"/>
    <property type="resolution" value="1.67 A"/>
    <property type="chains" value="A=1-136"/>
</dbReference>
<dbReference type="PDB" id="4RRA">
    <property type="method" value="X-ray"/>
    <property type="resolution" value="1.70 A"/>
    <property type="chains" value="A=1-136"/>
</dbReference>
<dbReference type="PDB" id="4RRB">
    <property type="method" value="X-ray"/>
    <property type="resolution" value="2.10 A"/>
    <property type="chains" value="A=1-136"/>
</dbReference>
<dbReference type="PDB" id="4RRC">
    <property type="method" value="X-ray"/>
    <property type="resolution" value="1.86 A"/>
    <property type="chains" value="A=1-136"/>
</dbReference>
<dbReference type="PDB" id="4RRD">
    <property type="method" value="X-ray"/>
    <property type="resolution" value="1.86 A"/>
    <property type="chains" value="A=1-136"/>
</dbReference>
<dbReference type="PDB" id="4RRH">
    <property type="method" value="X-ray"/>
    <property type="resolution" value="1.55 A"/>
    <property type="chains" value="A=1-136"/>
</dbReference>
<dbReference type="PDB" id="4RRI">
    <property type="method" value="X-ray"/>
    <property type="resolution" value="1.50 A"/>
    <property type="chains" value="A=1-136"/>
</dbReference>
<dbReference type="PDB" id="4RRJ">
    <property type="method" value="X-ray"/>
    <property type="resolution" value="1.86 A"/>
    <property type="chains" value="A=1-136"/>
</dbReference>
<dbReference type="PDB" id="4RRK">
    <property type="method" value="X-ray"/>
    <property type="resolution" value="1.86 A"/>
    <property type="chains" value="A=1-136"/>
</dbReference>
<dbReference type="PDB" id="4RRL">
    <property type="method" value="X-ray"/>
    <property type="resolution" value="1.97 A"/>
    <property type="chains" value="A=1-136"/>
</dbReference>
<dbReference type="PDB" id="4RRM">
    <property type="method" value="X-ray"/>
    <property type="resolution" value="1.55 A"/>
    <property type="chains" value="A=1-136"/>
</dbReference>
<dbReference type="PDBsum" id="4RR6"/>
<dbReference type="PDBsum" id="4RR7"/>
<dbReference type="PDBsum" id="4RR8"/>
<dbReference type="PDBsum" id="4RR9"/>
<dbReference type="PDBsum" id="4RRA"/>
<dbReference type="PDBsum" id="4RRB"/>
<dbReference type="PDBsum" id="4RRC"/>
<dbReference type="PDBsum" id="4RRD"/>
<dbReference type="PDBsum" id="4RRH"/>
<dbReference type="PDBsum" id="4RRI"/>
<dbReference type="PDBsum" id="4RRJ"/>
<dbReference type="PDBsum" id="4RRK"/>
<dbReference type="PDBsum" id="4RRL"/>
<dbReference type="PDBsum" id="4RRM"/>
<dbReference type="SMR" id="Q9YFY3"/>
<dbReference type="STRING" id="272557.APE_0117.1"/>
<dbReference type="EnsemblBacteria" id="BAA79028">
    <property type="protein sequence ID" value="BAA79028"/>
    <property type="gene ID" value="APE_0117.1"/>
</dbReference>
<dbReference type="GeneID" id="1445659"/>
<dbReference type="KEGG" id="ape:APE_0117.1"/>
<dbReference type="eggNOG" id="arCOG00401">
    <property type="taxonomic scope" value="Archaea"/>
</dbReference>
<dbReference type="EvolutionaryTrace" id="Q9YFY3"/>
<dbReference type="Proteomes" id="UP000002518">
    <property type="component" value="Chromosome"/>
</dbReference>
<dbReference type="GO" id="GO:0005737">
    <property type="term" value="C:cytoplasm"/>
    <property type="evidence" value="ECO:0007669"/>
    <property type="project" value="UniProtKB-SubCell"/>
</dbReference>
<dbReference type="GO" id="GO:0002161">
    <property type="term" value="F:aminoacyl-tRNA deacylase activity"/>
    <property type="evidence" value="ECO:0000314"/>
    <property type="project" value="UniProtKB"/>
</dbReference>
<dbReference type="GO" id="GO:0005524">
    <property type="term" value="F:ATP binding"/>
    <property type="evidence" value="ECO:0007669"/>
    <property type="project" value="InterPro"/>
</dbReference>
<dbReference type="GO" id="GO:0004829">
    <property type="term" value="F:threonine-tRNA ligase activity"/>
    <property type="evidence" value="ECO:0007669"/>
    <property type="project" value="InterPro"/>
</dbReference>
<dbReference type="GO" id="GO:0000049">
    <property type="term" value="F:tRNA binding"/>
    <property type="evidence" value="ECO:0007669"/>
    <property type="project" value="UniProtKB-KW"/>
</dbReference>
<dbReference type="GO" id="GO:0008270">
    <property type="term" value="F:zinc ion binding"/>
    <property type="evidence" value="ECO:0007669"/>
    <property type="project" value="InterPro"/>
</dbReference>
<dbReference type="GO" id="GO:0006435">
    <property type="term" value="P:threonyl-tRNA aminoacylation"/>
    <property type="evidence" value="ECO:0007669"/>
    <property type="project" value="TreeGrafter"/>
</dbReference>
<dbReference type="CDD" id="cd00860">
    <property type="entry name" value="ThrRS_anticodon"/>
    <property type="match status" value="1"/>
</dbReference>
<dbReference type="FunFam" id="3.50.80.10:FF:000004">
    <property type="entry name" value="Threonine--tRNA ligase"/>
    <property type="match status" value="1"/>
</dbReference>
<dbReference type="Gene3D" id="3.40.50.800">
    <property type="entry name" value="Anticodon-binding domain"/>
    <property type="match status" value="1"/>
</dbReference>
<dbReference type="Gene3D" id="3.50.80.10">
    <property type="entry name" value="D-tyrosyl-tRNA(Tyr) deacylase"/>
    <property type="match status" value="1"/>
</dbReference>
<dbReference type="InterPro" id="IPR004154">
    <property type="entry name" value="Anticodon-bd"/>
</dbReference>
<dbReference type="InterPro" id="IPR036621">
    <property type="entry name" value="Anticodon-bd_dom_sf"/>
</dbReference>
<dbReference type="InterPro" id="IPR023509">
    <property type="entry name" value="DTD-like_sf"/>
</dbReference>
<dbReference type="InterPro" id="IPR015011">
    <property type="entry name" value="Threonyl-tRNA_syn_edit_dom_arc"/>
</dbReference>
<dbReference type="InterPro" id="IPR047246">
    <property type="entry name" value="ThrRS_anticodon"/>
</dbReference>
<dbReference type="PANTHER" id="PTHR11451:SF44">
    <property type="entry name" value="THREONINE--TRNA LIGASE, CHLOROPLASTIC_MITOCHONDRIAL 2"/>
    <property type="match status" value="1"/>
</dbReference>
<dbReference type="PANTHER" id="PTHR11451">
    <property type="entry name" value="THREONINE-TRNA LIGASE"/>
    <property type="match status" value="1"/>
</dbReference>
<dbReference type="Pfam" id="PF03129">
    <property type="entry name" value="HGTP_anticodon"/>
    <property type="match status" value="1"/>
</dbReference>
<dbReference type="Pfam" id="PF08915">
    <property type="entry name" value="tRNA-Thr_ED"/>
    <property type="match status" value="1"/>
</dbReference>
<dbReference type="SUPFAM" id="SSF52954">
    <property type="entry name" value="Class II aaRS ABD-related"/>
    <property type="match status" value="1"/>
</dbReference>
<gene>
    <name type="primary">thrS2</name>
    <name type="ordered locus">APE_0117.1</name>
</gene>
<proteinExistence type="evidence at protein level"/>
<reference key="1">
    <citation type="journal article" date="1999" name="DNA Res.">
        <title>Complete genome sequence of an aerobic hyper-thermophilic crenarchaeon, Aeropyrum pernix K1.</title>
        <authorList>
            <person name="Kawarabayasi Y."/>
            <person name="Hino Y."/>
            <person name="Horikawa H."/>
            <person name="Yamazaki S."/>
            <person name="Haikawa Y."/>
            <person name="Jin-no K."/>
            <person name="Takahashi M."/>
            <person name="Sekine M."/>
            <person name="Baba S."/>
            <person name="Ankai A."/>
            <person name="Kosugi H."/>
            <person name="Hosoyama A."/>
            <person name="Fukui S."/>
            <person name="Nagai Y."/>
            <person name="Nishijima K."/>
            <person name="Nakazawa H."/>
            <person name="Takamiya M."/>
            <person name="Masuda S."/>
            <person name="Funahashi T."/>
            <person name="Tanaka T."/>
            <person name="Kudoh Y."/>
            <person name="Yamazaki J."/>
            <person name="Kushida N."/>
            <person name="Oguchi A."/>
            <person name="Aoki K."/>
            <person name="Kubota K."/>
            <person name="Nakamura Y."/>
            <person name="Nomura N."/>
            <person name="Sako Y."/>
            <person name="Kikuchi H."/>
        </authorList>
    </citation>
    <scope>NUCLEOTIDE SEQUENCE [LARGE SCALE GENOMIC DNA]</scope>
    <source>
        <strain>ATCC 700893 / DSM 11879 / JCM 9820 / NBRC 100138 / K1</strain>
    </source>
</reference>
<reference evidence="5 6 7 8 9 10 11 12 13 14 15" key="2">
    <citation type="journal article" date="2015" name="Nat. Commun.">
        <title>Specificity and catalysis hardwired at the RNA-protein interface in a translational proofreading enzyme.</title>
        <authorList>
            <person name="Ahmad S."/>
            <person name="Muthukumar S."/>
            <person name="Kuncha S.K."/>
            <person name="Routh S.B."/>
            <person name="Yerabham A.S."/>
            <person name="Hussain T."/>
            <person name="Kamarthapu V."/>
            <person name="Kruparani S.P."/>
            <person name="Sankaranarayanan R."/>
        </authorList>
    </citation>
    <scope>X-RAY CRYSTALLOGRAPHY (1.50 ANGSTROMS) OF 1-136 (WILD-TYPE AND MUTANT EDITING DOMAIN) IN COMPLEX WITH POST-TRANSFER EDITING SUBSTRATE ANALOGS</scope>
    <scope>FUNCTION</scope>
    <scope>EDITING REACTION MECHANISM</scope>
    <scope>DOMAIN</scope>
    <scope>MUTAGENESIS OF HIS-77; TYR-115 AND GLU-129</scope>
</reference>
<keyword id="KW-0002">3D-structure</keyword>
<keyword id="KW-0963">Cytoplasm</keyword>
<keyword id="KW-0648">Protein biosynthesis</keyword>
<keyword id="KW-1185">Reference proteome</keyword>
<keyword id="KW-0694">RNA-binding</keyword>
<keyword id="KW-0820">tRNA-binding</keyword>
<accession>Q9YFY3</accession>